<sequence>MKLIIFTGLVLFAIVSLIEAQAENERACLPQYQVCTDAPGNCCSNLVCDCYGRYKSGTRIGRNCFCLQKGVIYKREN</sequence>
<feature type="signal peptide" evidence="2">
    <location>
        <begin position="1"/>
        <end position="20"/>
    </location>
</feature>
<feature type="propeptide" id="PRO_0000401779" evidence="1">
    <location>
        <begin position="21"/>
        <end position="26"/>
    </location>
</feature>
<feature type="chain" id="PRO_0000401780" description="U8-lycotoxin-Ls1s">
    <location>
        <begin position="27"/>
        <end position="77"/>
    </location>
</feature>
<evidence type="ECO:0000250" key="1"/>
<evidence type="ECO:0000255" key="2"/>
<evidence type="ECO:0000305" key="3"/>
<comment type="subcellular location">
    <subcellularLocation>
        <location evidence="1">Secreted</location>
    </subcellularLocation>
</comment>
<comment type="tissue specificity">
    <text>Expressed by the venom gland.</text>
</comment>
<comment type="PTM">
    <text evidence="1">Contains 4 disulfide bonds.</text>
</comment>
<comment type="similarity">
    <text evidence="3">Belongs to the neurotoxin 19 (CSTX) family. 08 (U8-Lctx) subfamily.</text>
</comment>
<protein>
    <recommendedName>
        <fullName>U8-lycotoxin-Ls1s</fullName>
    </recommendedName>
    <alternativeName>
        <fullName>Toxin-like structure LSTX-H8</fullName>
    </alternativeName>
</protein>
<proteinExistence type="evidence at transcript level"/>
<accession>B6DCX9</accession>
<reference key="1">
    <citation type="journal article" date="2010" name="Zoology">
        <title>Transcriptome analysis of the venom glands of the Chinese wolf spider Lycosa singoriensis.</title>
        <authorList>
            <person name="Zhang Y."/>
            <person name="Chen J."/>
            <person name="Tang X."/>
            <person name="Wang F."/>
            <person name="Jiang L."/>
            <person name="Xiong X."/>
            <person name="Wang M."/>
            <person name="Rong M."/>
            <person name="Liu Z."/>
            <person name="Liang S."/>
        </authorList>
    </citation>
    <scope>NUCLEOTIDE SEQUENCE [LARGE SCALE MRNA]</scope>
    <source>
        <tissue>Venom gland</tissue>
    </source>
</reference>
<dbReference type="EMBL" id="EU926063">
    <property type="protein sequence ID" value="ACI41395.1"/>
    <property type="molecule type" value="mRNA"/>
</dbReference>
<dbReference type="EMBL" id="FM864067">
    <property type="protein sequence ID" value="CAS03664.1"/>
    <property type="molecule type" value="mRNA"/>
</dbReference>
<dbReference type="SMR" id="B6DCX9"/>
<dbReference type="ArachnoServer" id="AS001002">
    <property type="toxin name" value="U8-lycotoxin-Ls1s"/>
</dbReference>
<dbReference type="GO" id="GO:0005576">
    <property type="term" value="C:extracellular region"/>
    <property type="evidence" value="ECO:0007669"/>
    <property type="project" value="UniProtKB-SubCell"/>
</dbReference>
<dbReference type="GO" id="GO:0090729">
    <property type="term" value="F:toxin activity"/>
    <property type="evidence" value="ECO:0007669"/>
    <property type="project" value="UniProtKB-KW"/>
</dbReference>
<dbReference type="InterPro" id="IPR019553">
    <property type="entry name" value="Spider_toxin_CSTX_knottin"/>
</dbReference>
<dbReference type="Pfam" id="PF10530">
    <property type="entry name" value="Toxin_35"/>
    <property type="match status" value="1"/>
</dbReference>
<name>TX808_LYCSI</name>
<organism>
    <name type="scientific">Lycosa singoriensis</name>
    <name type="common">Wolf spider</name>
    <name type="synonym">Aranea singoriensis</name>
    <dbReference type="NCBI Taxonomy" id="434756"/>
    <lineage>
        <taxon>Eukaryota</taxon>
        <taxon>Metazoa</taxon>
        <taxon>Ecdysozoa</taxon>
        <taxon>Arthropoda</taxon>
        <taxon>Chelicerata</taxon>
        <taxon>Arachnida</taxon>
        <taxon>Araneae</taxon>
        <taxon>Araneomorphae</taxon>
        <taxon>Entelegynae</taxon>
        <taxon>Lycosoidea</taxon>
        <taxon>Lycosidae</taxon>
        <taxon>Lycosa</taxon>
    </lineage>
</organism>
<keyword id="KW-1015">Disulfide bond</keyword>
<keyword id="KW-0964">Secreted</keyword>
<keyword id="KW-0732">Signal</keyword>
<keyword id="KW-0800">Toxin</keyword>